<accession>Q978N3</accession>
<organism>
    <name type="scientific">Thermoplasma volcanium (strain ATCC 51530 / DSM 4299 / JCM 9571 / NBRC 15438 / GSS1)</name>
    <dbReference type="NCBI Taxonomy" id="273116"/>
    <lineage>
        <taxon>Archaea</taxon>
        <taxon>Methanobacteriati</taxon>
        <taxon>Thermoplasmatota</taxon>
        <taxon>Thermoplasmata</taxon>
        <taxon>Thermoplasmatales</taxon>
        <taxon>Thermoplasmataceae</taxon>
        <taxon>Thermoplasma</taxon>
    </lineage>
</organism>
<comment type="function">
    <text evidence="1">Catalyzes the hydrolytic cleavage of the carbon-nitrogen bond in imidazolone-5-propanoate to yield N-formimidoyl-L-glutamate. It is the third step in the universal histidine degradation pathway.</text>
</comment>
<comment type="catalytic activity">
    <reaction evidence="1">
        <text>4-imidazolone-5-propanoate + H2O = N-formimidoyl-L-glutamate</text>
        <dbReference type="Rhea" id="RHEA:23660"/>
        <dbReference type="ChEBI" id="CHEBI:15377"/>
        <dbReference type="ChEBI" id="CHEBI:58928"/>
        <dbReference type="ChEBI" id="CHEBI:77893"/>
        <dbReference type="EC" id="3.5.2.7"/>
    </reaction>
</comment>
<comment type="cofactor">
    <cofactor evidence="1">
        <name>Zn(2+)</name>
        <dbReference type="ChEBI" id="CHEBI:29105"/>
    </cofactor>
    <cofactor evidence="1">
        <name>Fe(3+)</name>
        <dbReference type="ChEBI" id="CHEBI:29034"/>
    </cofactor>
    <text evidence="1">Binds 1 zinc or iron ion per subunit.</text>
</comment>
<comment type="pathway">
    <text evidence="1">Amino-acid degradation; L-histidine degradation into L-glutamate; N-formimidoyl-L-glutamate from L-histidine: step 3/3.</text>
</comment>
<comment type="subcellular location">
    <subcellularLocation>
        <location evidence="1">Cytoplasm</location>
    </subcellularLocation>
</comment>
<comment type="similarity">
    <text evidence="1">Belongs to the metallo-dependent hydrolases superfamily. HutI family.</text>
</comment>
<protein>
    <recommendedName>
        <fullName evidence="1">Imidazolonepropionase</fullName>
        <ecNumber evidence="1">3.5.2.7</ecNumber>
    </recommendedName>
    <alternativeName>
        <fullName evidence="1">Imidazolone-5-propionate hydrolase</fullName>
    </alternativeName>
</protein>
<reference key="1">
    <citation type="journal article" date="2000" name="Proc. Natl. Acad. Sci. U.S.A.">
        <title>Archaeal adaptation to higher temperatures revealed by genomic sequence of Thermoplasma volcanium.</title>
        <authorList>
            <person name="Kawashima T."/>
            <person name="Amano N."/>
            <person name="Koike H."/>
            <person name="Makino S."/>
            <person name="Higuchi S."/>
            <person name="Kawashima-Ohya Y."/>
            <person name="Watanabe K."/>
            <person name="Yamazaki M."/>
            <person name="Kanehori K."/>
            <person name="Kawamoto T."/>
            <person name="Nunoshiba T."/>
            <person name="Yamamoto Y."/>
            <person name="Aramaki H."/>
            <person name="Makino K."/>
            <person name="Suzuki M."/>
        </authorList>
    </citation>
    <scope>NUCLEOTIDE SEQUENCE [LARGE SCALE GENOMIC DNA]</scope>
    <source>
        <strain>ATCC 51530 / DSM 4299 / JCM 9571 / NBRC 15438 / GSS1</strain>
    </source>
</reference>
<name>HUTI_THEVO</name>
<feature type="chain" id="PRO_0000160980" description="Imidazolonepropionase">
    <location>
        <begin position="1"/>
        <end position="404"/>
    </location>
</feature>
<feature type="binding site" evidence="1">
    <location>
        <position position="70"/>
    </location>
    <ligand>
        <name>Fe(3+)</name>
        <dbReference type="ChEBI" id="CHEBI:29034"/>
    </ligand>
</feature>
<feature type="binding site" evidence="1">
    <location>
        <position position="70"/>
    </location>
    <ligand>
        <name>Zn(2+)</name>
        <dbReference type="ChEBI" id="CHEBI:29105"/>
    </ligand>
</feature>
<feature type="binding site" evidence="1">
    <location>
        <position position="72"/>
    </location>
    <ligand>
        <name>Fe(3+)</name>
        <dbReference type="ChEBI" id="CHEBI:29034"/>
    </ligand>
</feature>
<feature type="binding site" evidence="1">
    <location>
        <position position="72"/>
    </location>
    <ligand>
        <name>Zn(2+)</name>
        <dbReference type="ChEBI" id="CHEBI:29105"/>
    </ligand>
</feature>
<feature type="binding site" evidence="1">
    <location>
        <position position="79"/>
    </location>
    <ligand>
        <name>4-imidazolone-5-propanoate</name>
        <dbReference type="ChEBI" id="CHEBI:77893"/>
    </ligand>
</feature>
<feature type="binding site" evidence="1">
    <location>
        <position position="142"/>
    </location>
    <ligand>
        <name>4-imidazolone-5-propanoate</name>
        <dbReference type="ChEBI" id="CHEBI:77893"/>
    </ligand>
</feature>
<feature type="binding site" evidence="1">
    <location>
        <position position="142"/>
    </location>
    <ligand>
        <name>N-formimidoyl-L-glutamate</name>
        <dbReference type="ChEBI" id="CHEBI:58928"/>
    </ligand>
</feature>
<feature type="binding site" evidence="1">
    <location>
        <position position="174"/>
    </location>
    <ligand>
        <name>4-imidazolone-5-propanoate</name>
        <dbReference type="ChEBI" id="CHEBI:77893"/>
    </ligand>
</feature>
<feature type="binding site" evidence="1">
    <location>
        <position position="234"/>
    </location>
    <ligand>
        <name>Fe(3+)</name>
        <dbReference type="ChEBI" id="CHEBI:29034"/>
    </ligand>
</feature>
<feature type="binding site" evidence="1">
    <location>
        <position position="234"/>
    </location>
    <ligand>
        <name>Zn(2+)</name>
        <dbReference type="ChEBI" id="CHEBI:29105"/>
    </ligand>
</feature>
<feature type="binding site" evidence="1">
    <location>
        <position position="237"/>
    </location>
    <ligand>
        <name>4-imidazolone-5-propanoate</name>
        <dbReference type="ChEBI" id="CHEBI:77893"/>
    </ligand>
</feature>
<feature type="binding site" evidence="1">
    <location>
        <position position="308"/>
    </location>
    <ligand>
        <name>Fe(3+)</name>
        <dbReference type="ChEBI" id="CHEBI:29034"/>
    </ligand>
</feature>
<feature type="binding site" evidence="1">
    <location>
        <position position="308"/>
    </location>
    <ligand>
        <name>Zn(2+)</name>
        <dbReference type="ChEBI" id="CHEBI:29105"/>
    </ligand>
</feature>
<keyword id="KW-0963">Cytoplasm</keyword>
<keyword id="KW-0369">Histidine metabolism</keyword>
<keyword id="KW-0378">Hydrolase</keyword>
<keyword id="KW-0408">Iron</keyword>
<keyword id="KW-0479">Metal-binding</keyword>
<keyword id="KW-0862">Zinc</keyword>
<proteinExistence type="inferred from homology"/>
<evidence type="ECO:0000255" key="1">
    <source>
        <dbReference type="HAMAP-Rule" id="MF_00372"/>
    </source>
</evidence>
<dbReference type="EC" id="3.5.2.7" evidence="1"/>
<dbReference type="EMBL" id="BA000011">
    <property type="protein sequence ID" value="BAB60524.1"/>
    <property type="molecule type" value="Genomic_DNA"/>
</dbReference>
<dbReference type="RefSeq" id="WP_010917615.1">
    <property type="nucleotide sequence ID" value="NC_002689.2"/>
</dbReference>
<dbReference type="SMR" id="Q978N3"/>
<dbReference type="STRING" id="273116.gene:9382190"/>
<dbReference type="PaxDb" id="273116-14325621"/>
<dbReference type="GeneID" id="1442073"/>
<dbReference type="KEGG" id="tvo:TVG1430123"/>
<dbReference type="eggNOG" id="arCOG00696">
    <property type="taxonomic scope" value="Archaea"/>
</dbReference>
<dbReference type="HOGENOM" id="CLU_041647_1_0_2"/>
<dbReference type="OrthoDB" id="24954at2157"/>
<dbReference type="PhylomeDB" id="Q978N3"/>
<dbReference type="UniPathway" id="UPA00379">
    <property type="reaction ID" value="UER00551"/>
</dbReference>
<dbReference type="Proteomes" id="UP000001017">
    <property type="component" value="Chromosome"/>
</dbReference>
<dbReference type="GO" id="GO:0005737">
    <property type="term" value="C:cytoplasm"/>
    <property type="evidence" value="ECO:0007669"/>
    <property type="project" value="UniProtKB-SubCell"/>
</dbReference>
<dbReference type="GO" id="GO:0050480">
    <property type="term" value="F:imidazolonepropionase activity"/>
    <property type="evidence" value="ECO:0007669"/>
    <property type="project" value="UniProtKB-UniRule"/>
</dbReference>
<dbReference type="GO" id="GO:0005506">
    <property type="term" value="F:iron ion binding"/>
    <property type="evidence" value="ECO:0007669"/>
    <property type="project" value="UniProtKB-UniRule"/>
</dbReference>
<dbReference type="GO" id="GO:0008270">
    <property type="term" value="F:zinc ion binding"/>
    <property type="evidence" value="ECO:0007669"/>
    <property type="project" value="UniProtKB-UniRule"/>
</dbReference>
<dbReference type="GO" id="GO:0019556">
    <property type="term" value="P:L-histidine catabolic process to glutamate and formamide"/>
    <property type="evidence" value="ECO:0007669"/>
    <property type="project" value="UniProtKB-UniPathway"/>
</dbReference>
<dbReference type="GO" id="GO:0019557">
    <property type="term" value="P:L-histidine catabolic process to glutamate and formate"/>
    <property type="evidence" value="ECO:0007669"/>
    <property type="project" value="UniProtKB-UniPathway"/>
</dbReference>
<dbReference type="CDD" id="cd01296">
    <property type="entry name" value="Imidazolone-5PH"/>
    <property type="match status" value="1"/>
</dbReference>
<dbReference type="Gene3D" id="3.20.20.140">
    <property type="entry name" value="Metal-dependent hydrolases"/>
    <property type="match status" value="1"/>
</dbReference>
<dbReference type="Gene3D" id="2.30.40.10">
    <property type="entry name" value="Urease, subunit C, domain 1"/>
    <property type="match status" value="1"/>
</dbReference>
<dbReference type="HAMAP" id="MF_00372">
    <property type="entry name" value="HutI"/>
    <property type="match status" value="1"/>
</dbReference>
<dbReference type="InterPro" id="IPR006680">
    <property type="entry name" value="Amidohydro-rel"/>
</dbReference>
<dbReference type="InterPro" id="IPR005920">
    <property type="entry name" value="HutI"/>
</dbReference>
<dbReference type="InterPro" id="IPR011059">
    <property type="entry name" value="Metal-dep_hydrolase_composite"/>
</dbReference>
<dbReference type="InterPro" id="IPR032466">
    <property type="entry name" value="Metal_Hydrolase"/>
</dbReference>
<dbReference type="NCBIfam" id="TIGR01224">
    <property type="entry name" value="hutI"/>
    <property type="match status" value="1"/>
</dbReference>
<dbReference type="PANTHER" id="PTHR42752">
    <property type="entry name" value="IMIDAZOLONEPROPIONASE"/>
    <property type="match status" value="1"/>
</dbReference>
<dbReference type="PANTHER" id="PTHR42752:SF1">
    <property type="entry name" value="IMIDAZOLONEPROPIONASE-RELATED"/>
    <property type="match status" value="1"/>
</dbReference>
<dbReference type="Pfam" id="PF01979">
    <property type="entry name" value="Amidohydro_1"/>
    <property type="match status" value="1"/>
</dbReference>
<dbReference type="SUPFAM" id="SSF51338">
    <property type="entry name" value="Composite domain of metallo-dependent hydrolases"/>
    <property type="match status" value="1"/>
</dbReference>
<dbReference type="SUPFAM" id="SSF51556">
    <property type="entry name" value="Metallo-dependent hydrolases"/>
    <property type="match status" value="1"/>
</dbReference>
<gene>
    <name evidence="1" type="primary">hutI</name>
    <name type="ordered locus">TV1382</name>
    <name type="ORF">TVG1430123</name>
</gene>
<sequence>MKITNIGAIVTPVGNSYHSGDKQSELDFIENATIYIENGKIAKITREHSSDAGDLDAEGSIVIPGLVDSHTHIIFGGNRSQEFYQRASGYTYSEILRSGNGIYKTVRDTANSSADEIFTQSMKRIADAVSHGTTTIELKTGYGLYEKEERKLLDVARKISNSGLVSTVLTYLMHVLPEGESEEAYEKYSEKILSSFRNYISFADVFCDEGAFSPNAAKAFLKFADNLGLGLKIHANEINNIGCVKACSGLNVKSFDHMIHANAEDVETIRSIGSAITLLPLTVFALDESYPDARVFIDSGVPVIIASDISPLNYNANLIFAMHLAVKYSSMKPEEALTATTINAASSLGLGEKKGTVEEGKDADIVIIDVDDYTEIPYEYGINTVKKVFHNGSLVFDRTKQFKL</sequence>